<feature type="chain" id="PRO_0000116892" description="Uncharacterized protein C1494.09c">
    <location>
        <begin position="1"/>
        <end position="157"/>
    </location>
</feature>
<gene>
    <name type="ORF">SPCC1494.09c</name>
</gene>
<dbReference type="EMBL" id="CU329672">
    <property type="protein sequence ID" value="CAA19307.1"/>
    <property type="molecule type" value="Genomic_DNA"/>
</dbReference>
<dbReference type="PIR" id="T41010">
    <property type="entry name" value="T41010"/>
</dbReference>
<dbReference type="SMR" id="O60083"/>
<dbReference type="BioGRID" id="275755">
    <property type="interactions" value="1"/>
</dbReference>
<dbReference type="FunCoup" id="O60083">
    <property type="interactions" value="22"/>
</dbReference>
<dbReference type="STRING" id="284812.O60083"/>
<dbReference type="PaxDb" id="4896-SPCC1494.09c.1"/>
<dbReference type="EnsemblFungi" id="SPCC1494.09c.1">
    <property type="protein sequence ID" value="SPCC1494.09c.1:pep"/>
    <property type="gene ID" value="SPCC1494.09c"/>
</dbReference>
<dbReference type="KEGG" id="spo:2539184"/>
<dbReference type="PomBase" id="SPCC1494.09c"/>
<dbReference type="VEuPathDB" id="FungiDB:SPCC1494.09c"/>
<dbReference type="HOGENOM" id="CLU_1678955_0_0_1"/>
<dbReference type="InParanoid" id="O60083"/>
<dbReference type="OMA" id="RMVVISK"/>
<dbReference type="PhylomeDB" id="O60083"/>
<dbReference type="PRO" id="PR:O60083"/>
<dbReference type="Proteomes" id="UP000002485">
    <property type="component" value="Chromosome III"/>
</dbReference>
<dbReference type="GO" id="GO:0005634">
    <property type="term" value="C:nucleus"/>
    <property type="evidence" value="ECO:0007005"/>
    <property type="project" value="PomBase"/>
</dbReference>
<dbReference type="GO" id="GO:0005675">
    <property type="term" value="C:transcription factor TFIIH holo complex"/>
    <property type="evidence" value="ECO:0000318"/>
    <property type="project" value="GO_Central"/>
</dbReference>
<dbReference type="GO" id="GO:0006367">
    <property type="term" value="P:transcription initiation at RNA polymerase II promoter"/>
    <property type="evidence" value="ECO:0000305"/>
    <property type="project" value="PomBase"/>
</dbReference>
<dbReference type="InterPro" id="IPR031349">
    <property type="entry name" value="Tfb6"/>
</dbReference>
<dbReference type="PANTHER" id="PTHR37781:SF1">
    <property type="entry name" value="ADR380WP"/>
    <property type="match status" value="1"/>
</dbReference>
<dbReference type="PANTHER" id="PTHR37781">
    <property type="entry name" value="TFIIH COMPLEX SUBUNIT"/>
    <property type="match status" value="1"/>
</dbReference>
<dbReference type="Pfam" id="PF17110">
    <property type="entry name" value="TFB6"/>
    <property type="match status" value="1"/>
</dbReference>
<name>YQK9_SCHPO</name>
<keyword id="KW-1185">Reference proteome</keyword>
<reference key="1">
    <citation type="journal article" date="2002" name="Nature">
        <title>The genome sequence of Schizosaccharomyces pombe.</title>
        <authorList>
            <person name="Wood V."/>
            <person name="Gwilliam R."/>
            <person name="Rajandream M.A."/>
            <person name="Lyne M.H."/>
            <person name="Lyne R."/>
            <person name="Stewart A."/>
            <person name="Sgouros J.G."/>
            <person name="Peat N."/>
            <person name="Hayles J."/>
            <person name="Baker S.G."/>
            <person name="Basham D."/>
            <person name="Bowman S."/>
            <person name="Brooks K."/>
            <person name="Brown D."/>
            <person name="Brown S."/>
            <person name="Chillingworth T."/>
            <person name="Churcher C.M."/>
            <person name="Collins M."/>
            <person name="Connor R."/>
            <person name="Cronin A."/>
            <person name="Davis P."/>
            <person name="Feltwell T."/>
            <person name="Fraser A."/>
            <person name="Gentles S."/>
            <person name="Goble A."/>
            <person name="Hamlin N."/>
            <person name="Harris D.E."/>
            <person name="Hidalgo J."/>
            <person name="Hodgson G."/>
            <person name="Holroyd S."/>
            <person name="Hornsby T."/>
            <person name="Howarth S."/>
            <person name="Huckle E.J."/>
            <person name="Hunt S."/>
            <person name="Jagels K."/>
            <person name="James K.D."/>
            <person name="Jones L."/>
            <person name="Jones M."/>
            <person name="Leather S."/>
            <person name="McDonald S."/>
            <person name="McLean J."/>
            <person name="Mooney P."/>
            <person name="Moule S."/>
            <person name="Mungall K.L."/>
            <person name="Murphy L.D."/>
            <person name="Niblett D."/>
            <person name="Odell C."/>
            <person name="Oliver K."/>
            <person name="O'Neil S."/>
            <person name="Pearson D."/>
            <person name="Quail M.A."/>
            <person name="Rabbinowitsch E."/>
            <person name="Rutherford K.M."/>
            <person name="Rutter S."/>
            <person name="Saunders D."/>
            <person name="Seeger K."/>
            <person name="Sharp S."/>
            <person name="Skelton J."/>
            <person name="Simmonds M.N."/>
            <person name="Squares R."/>
            <person name="Squares S."/>
            <person name="Stevens K."/>
            <person name="Taylor K."/>
            <person name="Taylor R.G."/>
            <person name="Tivey A."/>
            <person name="Walsh S.V."/>
            <person name="Warren T."/>
            <person name="Whitehead S."/>
            <person name="Woodward J.R."/>
            <person name="Volckaert G."/>
            <person name="Aert R."/>
            <person name="Robben J."/>
            <person name="Grymonprez B."/>
            <person name="Weltjens I."/>
            <person name="Vanstreels E."/>
            <person name="Rieger M."/>
            <person name="Schaefer M."/>
            <person name="Mueller-Auer S."/>
            <person name="Gabel C."/>
            <person name="Fuchs M."/>
            <person name="Duesterhoeft A."/>
            <person name="Fritzc C."/>
            <person name="Holzer E."/>
            <person name="Moestl D."/>
            <person name="Hilbert H."/>
            <person name="Borzym K."/>
            <person name="Langer I."/>
            <person name="Beck A."/>
            <person name="Lehrach H."/>
            <person name="Reinhardt R."/>
            <person name="Pohl T.M."/>
            <person name="Eger P."/>
            <person name="Zimmermann W."/>
            <person name="Wedler H."/>
            <person name="Wambutt R."/>
            <person name="Purnelle B."/>
            <person name="Goffeau A."/>
            <person name="Cadieu E."/>
            <person name="Dreano S."/>
            <person name="Gloux S."/>
            <person name="Lelaure V."/>
            <person name="Mottier S."/>
            <person name="Galibert F."/>
            <person name="Aves S.J."/>
            <person name="Xiang Z."/>
            <person name="Hunt C."/>
            <person name="Moore K."/>
            <person name="Hurst S.M."/>
            <person name="Lucas M."/>
            <person name="Rochet M."/>
            <person name="Gaillardin C."/>
            <person name="Tallada V.A."/>
            <person name="Garzon A."/>
            <person name="Thode G."/>
            <person name="Daga R.R."/>
            <person name="Cruzado L."/>
            <person name="Jimenez J."/>
            <person name="Sanchez M."/>
            <person name="del Rey F."/>
            <person name="Benito J."/>
            <person name="Dominguez A."/>
            <person name="Revuelta J.L."/>
            <person name="Moreno S."/>
            <person name="Armstrong J."/>
            <person name="Forsburg S.L."/>
            <person name="Cerutti L."/>
            <person name="Lowe T."/>
            <person name="McCombie W.R."/>
            <person name="Paulsen I."/>
            <person name="Potashkin J."/>
            <person name="Shpakovski G.V."/>
            <person name="Ussery D."/>
            <person name="Barrell B.G."/>
            <person name="Nurse P."/>
        </authorList>
    </citation>
    <scope>NUCLEOTIDE SEQUENCE [LARGE SCALE GENOMIC DNA]</scope>
    <source>
        <strain>972 / ATCC 24843</strain>
    </source>
</reference>
<accession>O60083</accession>
<protein>
    <recommendedName>
        <fullName>Uncharacterized protein C1494.09c</fullName>
    </recommendedName>
</protein>
<proteinExistence type="predicted"/>
<organism>
    <name type="scientific">Schizosaccharomyces pombe (strain 972 / ATCC 24843)</name>
    <name type="common">Fission yeast</name>
    <dbReference type="NCBI Taxonomy" id="284812"/>
    <lineage>
        <taxon>Eukaryota</taxon>
        <taxon>Fungi</taxon>
        <taxon>Dikarya</taxon>
        <taxon>Ascomycota</taxon>
        <taxon>Taphrinomycotina</taxon>
        <taxon>Schizosaccharomycetes</taxon>
        <taxon>Schizosaccharomycetales</taxon>
        <taxon>Schizosaccharomycetaceae</taxon>
        <taxon>Schizosaccharomyces</taxon>
    </lineage>
</organism>
<sequence>MALELTEHQLNKLRDFLDEILLDVSQKYQKKFHPGGYQKLEELAFDLEPYFQVVSSIPLEKHTFLVTNFTLRGIDFFVDTIVGFPASPETTFKVFSLLDSLCLRLIQSGNLSTTDTIRLKSLMENCRMVVISKLSDVQGYEMDCASIFEKSLNSIDF</sequence>